<dbReference type="EC" id="3.4.22.15"/>
<dbReference type="SMR" id="Q10991"/>
<dbReference type="STRING" id="9940.ENSOARP00000008997"/>
<dbReference type="MEROPS" id="C01.032"/>
<dbReference type="PaxDb" id="9940-ENSOARP00000008997"/>
<dbReference type="eggNOG" id="KOG1543">
    <property type="taxonomic scope" value="Eukaryota"/>
</dbReference>
<dbReference type="Proteomes" id="UP000002356">
    <property type="component" value="Unplaced"/>
</dbReference>
<dbReference type="GO" id="GO:0016324">
    <property type="term" value="C:apical plasma membrane"/>
    <property type="evidence" value="ECO:0007669"/>
    <property type="project" value="UniProtKB-SubCell"/>
</dbReference>
<dbReference type="GO" id="GO:0042583">
    <property type="term" value="C:chromaffin granule"/>
    <property type="evidence" value="ECO:0000250"/>
    <property type="project" value="UniProtKB"/>
</dbReference>
<dbReference type="GO" id="GO:0005615">
    <property type="term" value="C:extracellular space"/>
    <property type="evidence" value="ECO:0000250"/>
    <property type="project" value="UniProtKB"/>
</dbReference>
<dbReference type="GO" id="GO:0005764">
    <property type="term" value="C:lysosome"/>
    <property type="evidence" value="ECO:0000250"/>
    <property type="project" value="UniProtKB"/>
</dbReference>
<dbReference type="GO" id="GO:0004197">
    <property type="term" value="F:cysteine-type endopeptidase activity"/>
    <property type="evidence" value="ECO:0000250"/>
    <property type="project" value="UniProtKB"/>
</dbReference>
<dbReference type="GO" id="GO:0004175">
    <property type="term" value="F:endopeptidase activity"/>
    <property type="evidence" value="ECO:0000250"/>
    <property type="project" value="UniProtKB"/>
</dbReference>
<dbReference type="GO" id="GO:0046872">
    <property type="term" value="F:metal ion binding"/>
    <property type="evidence" value="ECO:0007669"/>
    <property type="project" value="UniProtKB-KW"/>
</dbReference>
<dbReference type="GO" id="GO:0048002">
    <property type="term" value="P:antigen processing and presentation of peptide antigen"/>
    <property type="evidence" value="ECO:0000250"/>
    <property type="project" value="UniProtKB"/>
</dbReference>
<dbReference type="GO" id="GO:0043373">
    <property type="term" value="P:CD4-positive, alpha-beta T cell lineage commitment"/>
    <property type="evidence" value="ECO:0000250"/>
    <property type="project" value="UniProtKB"/>
</dbReference>
<dbReference type="GO" id="GO:0030574">
    <property type="term" value="P:collagen catabolic process"/>
    <property type="evidence" value="ECO:0000250"/>
    <property type="project" value="UniProtKB"/>
</dbReference>
<dbReference type="GO" id="GO:0060309">
    <property type="term" value="P:elastin catabolic process"/>
    <property type="evidence" value="ECO:0000250"/>
    <property type="project" value="UniProtKB"/>
</dbReference>
<dbReference type="GO" id="GO:0034230">
    <property type="term" value="P:enkephalin processing"/>
    <property type="evidence" value="ECO:0000250"/>
    <property type="project" value="UniProtKB"/>
</dbReference>
<dbReference type="GO" id="GO:0016540">
    <property type="term" value="P:protein autoprocessing"/>
    <property type="evidence" value="ECO:0000250"/>
    <property type="project" value="UniProtKB"/>
</dbReference>
<dbReference type="GO" id="GO:0031638">
    <property type="term" value="P:zymogen activation"/>
    <property type="evidence" value="ECO:0000250"/>
    <property type="project" value="UniProtKB"/>
</dbReference>
<dbReference type="CDD" id="cd02248">
    <property type="entry name" value="Peptidase_C1A"/>
    <property type="match status" value="1"/>
</dbReference>
<dbReference type="FunFam" id="3.90.70.10:FF:000332">
    <property type="entry name" value="Cathepsin L1"/>
    <property type="match status" value="1"/>
</dbReference>
<dbReference type="Gene3D" id="3.90.70.10">
    <property type="entry name" value="Cysteine proteinases"/>
    <property type="match status" value="1"/>
</dbReference>
<dbReference type="InterPro" id="IPR038765">
    <property type="entry name" value="Papain-like_cys_pep_sf"/>
</dbReference>
<dbReference type="InterPro" id="IPR025661">
    <property type="entry name" value="Pept_asp_AS"/>
</dbReference>
<dbReference type="InterPro" id="IPR000169">
    <property type="entry name" value="Pept_cys_AS"/>
</dbReference>
<dbReference type="InterPro" id="IPR025660">
    <property type="entry name" value="Pept_his_AS"/>
</dbReference>
<dbReference type="InterPro" id="IPR013128">
    <property type="entry name" value="Peptidase_C1A"/>
</dbReference>
<dbReference type="InterPro" id="IPR000668">
    <property type="entry name" value="Peptidase_C1A_C"/>
</dbReference>
<dbReference type="InterPro" id="IPR039417">
    <property type="entry name" value="Peptidase_C1A_papain-like"/>
</dbReference>
<dbReference type="PANTHER" id="PTHR12411">
    <property type="entry name" value="CYSTEINE PROTEASE FAMILY C1-RELATED"/>
    <property type="match status" value="1"/>
</dbReference>
<dbReference type="Pfam" id="PF00112">
    <property type="entry name" value="Peptidase_C1"/>
    <property type="match status" value="1"/>
</dbReference>
<dbReference type="PRINTS" id="PR00705">
    <property type="entry name" value="PAPAIN"/>
</dbReference>
<dbReference type="SMART" id="SM00645">
    <property type="entry name" value="Pept_C1"/>
    <property type="match status" value="1"/>
</dbReference>
<dbReference type="SUPFAM" id="SSF54001">
    <property type="entry name" value="Cysteine proteinases"/>
    <property type="match status" value="1"/>
</dbReference>
<dbReference type="PROSITE" id="PS00640">
    <property type="entry name" value="THIOL_PROTEASE_ASN"/>
    <property type="match status" value="1"/>
</dbReference>
<dbReference type="PROSITE" id="PS00139">
    <property type="entry name" value="THIOL_PROTEASE_CYS"/>
    <property type="match status" value="1"/>
</dbReference>
<dbReference type="PROSITE" id="PS00639">
    <property type="entry name" value="THIOL_PROTEASE_HIS"/>
    <property type="match status" value="1"/>
</dbReference>
<organism>
    <name type="scientific">Ovis aries</name>
    <name type="common">Sheep</name>
    <dbReference type="NCBI Taxonomy" id="9940"/>
    <lineage>
        <taxon>Eukaryota</taxon>
        <taxon>Metazoa</taxon>
        <taxon>Chordata</taxon>
        <taxon>Craniata</taxon>
        <taxon>Vertebrata</taxon>
        <taxon>Euteleostomi</taxon>
        <taxon>Mammalia</taxon>
        <taxon>Eutheria</taxon>
        <taxon>Laurasiatheria</taxon>
        <taxon>Artiodactyla</taxon>
        <taxon>Ruminantia</taxon>
        <taxon>Pecora</taxon>
        <taxon>Bovidae</taxon>
        <taxon>Caprinae</taxon>
        <taxon>Ovis</taxon>
    </lineage>
</organism>
<name>CATL1_SHEEP</name>
<feature type="chain" id="PRO_0000450794" description="Cathepsin L" evidence="3">
    <location>
        <begin position="1"/>
        <end position="217"/>
    </location>
</feature>
<feature type="chain" id="PRO_0000026260" description="Cathepsin L heavy chain">
    <location>
        <begin position="1"/>
        <end position="175"/>
    </location>
</feature>
<feature type="propeptide" id="PRO_0000026261">
    <location>
        <position position="176"/>
    </location>
</feature>
<feature type="chain" id="PRO_0000026262" description="Cathepsin L light chain">
    <location>
        <begin position="177"/>
        <end position="217"/>
    </location>
</feature>
<feature type="active site" evidence="3">
    <location>
        <position position="25"/>
    </location>
</feature>
<feature type="active site" evidence="3">
    <location>
        <position position="163"/>
    </location>
</feature>
<feature type="active site" evidence="3">
    <location>
        <position position="184"/>
    </location>
</feature>
<feature type="binding site" evidence="3">
    <location>
        <position position="50"/>
    </location>
    <ligand>
        <name>Zn(2+)</name>
        <dbReference type="ChEBI" id="CHEBI:29105"/>
        <label>2</label>
    </ligand>
</feature>
<feature type="binding site" evidence="3">
    <location>
        <position position="71"/>
    </location>
    <ligand>
        <name>Zn(2+)</name>
        <dbReference type="ChEBI" id="CHEBI:29105"/>
        <label>3</label>
    </ligand>
</feature>
<feature type="binding site" evidence="3">
    <location>
        <position position="86"/>
    </location>
    <ligand>
        <name>Zn(2+)</name>
        <dbReference type="ChEBI" id="CHEBI:29105"/>
        <label>2</label>
    </ligand>
</feature>
<feature type="binding site" evidence="3">
    <location>
        <position position="92"/>
    </location>
    <ligand>
        <name>Zn(2+)</name>
        <dbReference type="ChEBI" id="CHEBI:29105"/>
        <label>4</label>
    </ligand>
</feature>
<feature type="binding site" evidence="3">
    <location>
        <position position="114"/>
    </location>
    <ligand>
        <name>Zn(2+)</name>
        <dbReference type="ChEBI" id="CHEBI:29105"/>
        <label>3</label>
    </ligand>
</feature>
<feature type="binding site" evidence="3">
    <location>
        <position position="137"/>
    </location>
    <ligand>
        <name>Zn(2+)</name>
        <dbReference type="ChEBI" id="CHEBI:29105"/>
        <label>5</label>
    </ligand>
</feature>
<feature type="binding site" evidence="3">
    <location>
        <position position="140"/>
    </location>
    <ligand>
        <name>Zn(2+)</name>
        <dbReference type="ChEBI" id="CHEBI:29105"/>
        <label>5</label>
    </ligand>
</feature>
<feature type="binding site" evidence="3">
    <location>
        <position position="160"/>
    </location>
    <ligand>
        <name>Zn(2+)</name>
        <dbReference type="ChEBI" id="CHEBI:29105"/>
        <label>6</label>
    </ligand>
</feature>
<feature type="binding site" evidence="3">
    <location>
        <position position="162"/>
    </location>
    <ligand>
        <name>Zn(2+)</name>
        <dbReference type="ChEBI" id="CHEBI:29105"/>
        <label>7</label>
    </ligand>
</feature>
<feature type="disulfide bond" evidence="3">
    <location>
        <begin position="22"/>
        <end position="65"/>
    </location>
</feature>
<feature type="disulfide bond" description="Interchain (between heavy and light chains)" evidence="3">
    <location>
        <begin position="156"/>
        <end position="206"/>
    </location>
</feature>
<protein>
    <recommendedName>
        <fullName>Procathepsin L</fullName>
        <ecNumber>3.4.22.15</ecNumber>
    </recommendedName>
    <alternativeName>
        <fullName>Cathepsin L1</fullName>
    </alternativeName>
    <component>
        <recommendedName>
            <fullName>Cathepsin L heavy chain</fullName>
        </recommendedName>
    </component>
    <component>
        <recommendedName>
            <fullName>Cathepsin L light chain</fullName>
        </recommendedName>
    </component>
    <component>
        <recommendedName>
            <fullName>Cathepsin L</fullName>
        </recommendedName>
    </component>
</protein>
<reference key="1">
    <citation type="journal article" date="1996" name="Comp. Biochem. Physiol.">
        <title>The amino acid sequences, structure comparisons and inhibition kinetics of sheep cathepsin L and sheep stefin B.</title>
        <authorList>
            <person name="Ritonja A."/>
            <person name="Coetzer T.H.T."/>
            <person name="Pike R.N."/>
            <person name="Dennison C."/>
        </authorList>
    </citation>
    <scope>PROTEIN SEQUENCE</scope>
    <source>
        <tissue>Liver</tissue>
    </source>
</reference>
<proteinExistence type="evidence at protein level"/>
<sequence length="217" mass="23608">VPKSVDWTKKGYVTPVKNQGQCGSCWAFSATGALEGQMFRKTGKLVSLSEQNLVDSSRPQGNQGCNGGLMDNAFQYIKENGGLDSEESYPYEATDTSCNYKPEYSAAKDTGFVDIPQREKALMKAVATVGPISVAIDAGHSSFQFYKSGIYYDPDCSSKDLDHGVLVVGYGFEGTNNKFWIVKNSWGPEWGNKGYVKMAKDQNNHCGIATAASYPTV</sequence>
<keyword id="KW-1003">Cell membrane</keyword>
<keyword id="KW-0968">Cytoplasmic vesicle</keyword>
<keyword id="KW-0903">Direct protein sequencing</keyword>
<keyword id="KW-1015">Disulfide bond</keyword>
<keyword id="KW-0378">Hydrolase</keyword>
<keyword id="KW-0458">Lysosome</keyword>
<keyword id="KW-0472">Membrane</keyword>
<keyword id="KW-0479">Metal-binding</keyword>
<keyword id="KW-0645">Protease</keyword>
<keyword id="KW-1185">Reference proteome</keyword>
<keyword id="KW-0964">Secreted</keyword>
<keyword id="KW-0788">Thiol protease</keyword>
<keyword id="KW-0862">Zinc</keyword>
<evidence type="ECO:0000250" key="1">
    <source>
        <dbReference type="UniProtKB" id="P06797"/>
    </source>
</evidence>
<evidence type="ECO:0000250" key="2">
    <source>
        <dbReference type="UniProtKB" id="P07154"/>
    </source>
</evidence>
<evidence type="ECO:0000250" key="3">
    <source>
        <dbReference type="UniProtKB" id="P07711"/>
    </source>
</evidence>
<evidence type="ECO:0000250" key="4">
    <source>
        <dbReference type="UniProtKB" id="P25975"/>
    </source>
</evidence>
<evidence type="ECO:0000255" key="5">
    <source>
        <dbReference type="PROSITE-ProRule" id="PRU10088"/>
    </source>
</evidence>
<evidence type="ECO:0000255" key="6">
    <source>
        <dbReference type="PROSITE-ProRule" id="PRU10089"/>
    </source>
</evidence>
<evidence type="ECO:0000255" key="7">
    <source>
        <dbReference type="PROSITE-ProRule" id="PRU10090"/>
    </source>
</evidence>
<comment type="function">
    <text evidence="1 2 3 4">Thiol protease important for the overall degradation of proteins in lysosomes (By similarity). Plays a critical for normal cellular functions such as general protein turnover, antigen processing and bone remodeling. Involved in the solubilization of cross-linked TG/thyroglobulin and in the subsequent release of thyroid hormone thyroxine (T4) by limited proteolysis of TG/thyroglobulin in the thyroid follicle lumen (By similarity). In neuroendocrine chromaffin cells secretory vesicles, catalyzes the prohormone proenkephalin processing to the active enkephalin peptide neurotransmitter (By similarity). In thymus, regulates CD4(+) T cell positive selection by generating the major histocompatibility complex class II (MHCII) bound peptide ligands presented by cortical thymic epithelial cells. Also mediates invariant chain processing in cortical thymic epithelial cells. Major elastin-degrading enzyme at neutral pH. Accumulates as a mature and active enzyme in the extracellular space of antigen presenting cells (APCs) to regulate degradation of the extracellular matrix in the course of inflammation (By similarity). Secreted form generates endostatin from COL18A1 (By similarity). Critical for cardiac morphology and function. Plays an important role in hair follicle morphogenesis and cycling, as well as epidermal differentiation (By similarity). Required for maximal stimulation of steroidogenesis by TIMP1 (By similarity).</text>
</comment>
<comment type="catalytic activity">
    <reaction evidence="3">
        <text>Specificity close to that of papain. As compared to cathepsin B, cathepsin L exhibits higher activity toward protein substrates, but has little activity on Z-Arg-Arg-NHMec, and no peptidyl-dipeptidase activity.</text>
        <dbReference type="EC" id="3.4.22.15"/>
    </reaction>
</comment>
<comment type="activity regulation">
    <text evidence="1 3">Inhibited by the propeptide produced by autocleavage (By similarity). Long isoform of CD74/Ii chain stabilizes the conformation of mature CTSL by binding to its active site and serving as a chaperone to help maintain a pool of mature enzyme in endocytic compartments and extracellular space of APCs. IFNG enhances the conversion into the CTSL mature and active form (By similarity). Inhibited by CST6. Inhibited by the glycopeptide antibiotic teicoplanin. Inhibited by amantadine (By similarity).</text>
</comment>
<comment type="subunit">
    <text evidence="1">Dimer of a heavy and a light chain linked by disulfide bonds. Interacts with Long isoform of CD74/Ii chain; the interaction stabilizes the conformation of mature CTSL.</text>
</comment>
<comment type="subcellular location">
    <subcellularLocation>
        <location evidence="1">Lysosome</location>
    </subcellularLocation>
    <subcellularLocation>
        <location evidence="1">Apical cell membrane</location>
        <topology evidence="1">Peripheral membrane protein</topology>
        <orientation evidence="1">Extracellular side</orientation>
    </subcellularLocation>
    <subcellularLocation>
        <location evidence="4">Cytoplasmic vesicle</location>
        <location evidence="4">Secretory vesicle</location>
        <location evidence="4">Chromaffin granule</location>
    </subcellularLocation>
    <subcellularLocation>
        <location evidence="1">Secreted</location>
        <location evidence="1">Extracellular space</location>
    </subcellularLocation>
    <subcellularLocation>
        <location evidence="1">Secreted</location>
    </subcellularLocation>
    <text evidence="1">Localizes to the apical membrane of thyroid epithelial cells. Released at extracellular space by activated dendritic cells and macrophages.</text>
</comment>
<comment type="PTM">
    <text evidence="1 3">During export along the endocytic pathway, pro-CTSL undergoes several proteolytic cleavages to generate the CTSL single-chain and two-chain mature forms, composed of a heavy chain linked to a light chain by disulfide bonds (By similarity). Autocleavage; produces the single-chain CTSL after cleavage of the propeptide. The cleavage can be intermolecular (By similarity).</text>
</comment>
<comment type="similarity">
    <text evidence="5 6 7">Belongs to the peptidase C1 family.</text>
</comment>
<gene>
    <name type="primary">CTSL</name>
    <name type="synonym">CTSL1</name>
</gene>
<accession>Q10991</accession>